<accession>A1VYA2</accession>
<organism>
    <name type="scientific">Campylobacter jejuni subsp. jejuni serotype O:23/36 (strain 81-176)</name>
    <dbReference type="NCBI Taxonomy" id="354242"/>
    <lineage>
        <taxon>Bacteria</taxon>
        <taxon>Pseudomonadati</taxon>
        <taxon>Campylobacterota</taxon>
        <taxon>Epsilonproteobacteria</taxon>
        <taxon>Campylobacterales</taxon>
        <taxon>Campylobacteraceae</taxon>
        <taxon>Campylobacter</taxon>
    </lineage>
</organism>
<sequence>MATRHQVRQSVISLLYAFELNSQNNVFVDEILDEKKIRNEQKNFTLNLYHGILDNLNNIDETLNSFLNDNQITALGHVERAILRLGAYELLFTDTPSAIVINEAIELAKELANDNSPKFINGVLDALIKAKK</sequence>
<protein>
    <recommendedName>
        <fullName evidence="1">Transcription antitermination protein NusB</fullName>
    </recommendedName>
    <alternativeName>
        <fullName evidence="1">Antitermination factor NusB</fullName>
    </alternativeName>
</protein>
<reference key="1">
    <citation type="submission" date="2006-12" db="EMBL/GenBank/DDBJ databases">
        <authorList>
            <person name="Fouts D.E."/>
            <person name="Nelson K.E."/>
            <person name="Sebastian Y."/>
        </authorList>
    </citation>
    <scope>NUCLEOTIDE SEQUENCE [LARGE SCALE GENOMIC DNA]</scope>
    <source>
        <strain>81-176</strain>
    </source>
</reference>
<evidence type="ECO:0000255" key="1">
    <source>
        <dbReference type="HAMAP-Rule" id="MF_00073"/>
    </source>
</evidence>
<gene>
    <name evidence="1" type="primary">nusB</name>
    <name type="ordered locus">CJJ81176_0405</name>
</gene>
<dbReference type="EMBL" id="CP000538">
    <property type="protein sequence ID" value="EAQ73138.1"/>
    <property type="molecule type" value="Genomic_DNA"/>
</dbReference>
<dbReference type="RefSeq" id="WP_002854405.1">
    <property type="nucleotide sequence ID" value="NC_008787.1"/>
</dbReference>
<dbReference type="SMR" id="A1VYA2"/>
<dbReference type="KEGG" id="cjj:CJJ81176_0405"/>
<dbReference type="eggNOG" id="COG0781">
    <property type="taxonomic scope" value="Bacteria"/>
</dbReference>
<dbReference type="HOGENOM" id="CLU_087843_3_3_7"/>
<dbReference type="Proteomes" id="UP000000646">
    <property type="component" value="Chromosome"/>
</dbReference>
<dbReference type="GO" id="GO:0005829">
    <property type="term" value="C:cytosol"/>
    <property type="evidence" value="ECO:0007669"/>
    <property type="project" value="TreeGrafter"/>
</dbReference>
<dbReference type="GO" id="GO:0003723">
    <property type="term" value="F:RNA binding"/>
    <property type="evidence" value="ECO:0007669"/>
    <property type="project" value="UniProtKB-UniRule"/>
</dbReference>
<dbReference type="GO" id="GO:0006353">
    <property type="term" value="P:DNA-templated transcription termination"/>
    <property type="evidence" value="ECO:0007669"/>
    <property type="project" value="UniProtKB-UniRule"/>
</dbReference>
<dbReference type="GO" id="GO:0031564">
    <property type="term" value="P:transcription antitermination"/>
    <property type="evidence" value="ECO:0007669"/>
    <property type="project" value="UniProtKB-KW"/>
</dbReference>
<dbReference type="Gene3D" id="1.10.940.10">
    <property type="entry name" value="NusB-like"/>
    <property type="match status" value="1"/>
</dbReference>
<dbReference type="HAMAP" id="MF_00073">
    <property type="entry name" value="NusB"/>
    <property type="match status" value="1"/>
</dbReference>
<dbReference type="InterPro" id="IPR035926">
    <property type="entry name" value="NusB-like_sf"/>
</dbReference>
<dbReference type="InterPro" id="IPR011605">
    <property type="entry name" value="NusB_fam"/>
</dbReference>
<dbReference type="InterPro" id="IPR006027">
    <property type="entry name" value="NusB_RsmB_TIM44"/>
</dbReference>
<dbReference type="NCBIfam" id="TIGR01951">
    <property type="entry name" value="nusB"/>
    <property type="match status" value="1"/>
</dbReference>
<dbReference type="PANTHER" id="PTHR11078:SF3">
    <property type="entry name" value="ANTITERMINATION NUSB DOMAIN-CONTAINING PROTEIN"/>
    <property type="match status" value="1"/>
</dbReference>
<dbReference type="PANTHER" id="PTHR11078">
    <property type="entry name" value="N UTILIZATION SUBSTANCE PROTEIN B-RELATED"/>
    <property type="match status" value="1"/>
</dbReference>
<dbReference type="Pfam" id="PF01029">
    <property type="entry name" value="NusB"/>
    <property type="match status" value="1"/>
</dbReference>
<dbReference type="SUPFAM" id="SSF48013">
    <property type="entry name" value="NusB-like"/>
    <property type="match status" value="1"/>
</dbReference>
<proteinExistence type="inferred from homology"/>
<feature type="chain" id="PRO_1000023724" description="Transcription antitermination protein NusB">
    <location>
        <begin position="1"/>
        <end position="132"/>
    </location>
</feature>
<keyword id="KW-0694">RNA-binding</keyword>
<keyword id="KW-0804">Transcription</keyword>
<keyword id="KW-0889">Transcription antitermination</keyword>
<keyword id="KW-0805">Transcription regulation</keyword>
<comment type="function">
    <text evidence="1">Involved in transcription antitermination. Required for transcription of ribosomal RNA (rRNA) genes. Binds specifically to the boxA antiterminator sequence of the ribosomal RNA (rrn) operons.</text>
</comment>
<comment type="similarity">
    <text evidence="1">Belongs to the NusB family.</text>
</comment>
<name>NUSB_CAMJJ</name>